<proteinExistence type="inferred from homology"/>
<accession>B5FP39</accession>
<comment type="function">
    <text evidence="1">Catalyzes the interconversion of 2-phosphoglycerate and 3-phosphoglycerate.</text>
</comment>
<comment type="catalytic activity">
    <reaction evidence="1">
        <text>(2R)-2-phosphoglycerate = (2R)-3-phosphoglycerate</text>
        <dbReference type="Rhea" id="RHEA:15901"/>
        <dbReference type="ChEBI" id="CHEBI:58272"/>
        <dbReference type="ChEBI" id="CHEBI:58289"/>
        <dbReference type="EC" id="5.4.2.11"/>
    </reaction>
</comment>
<comment type="pathway">
    <text evidence="1">Carbohydrate degradation; glycolysis; pyruvate from D-glyceraldehyde 3-phosphate: step 3/5.</text>
</comment>
<comment type="subunit">
    <text evidence="1">Homodimer.</text>
</comment>
<comment type="similarity">
    <text evidence="1">Belongs to the phosphoglycerate mutase family. BPG-dependent PGAM subfamily.</text>
</comment>
<sequence length="250" mass="28507">MAVTKLVLVRHGESQWNKENRFTGWYDVDLSEKGISEAKAAGKLLKEEGFSFDFAYTSVLKRAIHTLWNVLDELDQAWLPVEKSWKLNERHYGALQGLNKAETAEKYGDEQVKQWRRGFAVTPPELTKDDERYPGHDPRYAKLSEKELPLTESLALTIDRVIPYWNDTILPRMKSGERVIIAAHGNSLRALVKYLDNMSEDEILELNIPTGVPLVYEFDENFKPIKHYYLGNADEIAAKAAAVANQGKAK</sequence>
<name>GPMA_SALDC</name>
<keyword id="KW-0312">Gluconeogenesis</keyword>
<keyword id="KW-0324">Glycolysis</keyword>
<keyword id="KW-0413">Isomerase</keyword>
<evidence type="ECO:0000255" key="1">
    <source>
        <dbReference type="HAMAP-Rule" id="MF_01039"/>
    </source>
</evidence>
<reference key="1">
    <citation type="journal article" date="2011" name="J. Bacteriol.">
        <title>Comparative genomics of 28 Salmonella enterica isolates: evidence for CRISPR-mediated adaptive sublineage evolution.</title>
        <authorList>
            <person name="Fricke W.F."/>
            <person name="Mammel M.K."/>
            <person name="McDermott P.F."/>
            <person name="Tartera C."/>
            <person name="White D.G."/>
            <person name="Leclerc J.E."/>
            <person name="Ravel J."/>
            <person name="Cebula T.A."/>
        </authorList>
    </citation>
    <scope>NUCLEOTIDE SEQUENCE [LARGE SCALE GENOMIC DNA]</scope>
    <source>
        <strain>CT_02021853</strain>
    </source>
</reference>
<feature type="chain" id="PRO_1000135971" description="2,3-bisphosphoglycerate-dependent phosphoglycerate mutase">
    <location>
        <begin position="1"/>
        <end position="250"/>
    </location>
</feature>
<feature type="active site" description="Tele-phosphohistidine intermediate" evidence="1">
    <location>
        <position position="11"/>
    </location>
</feature>
<feature type="active site" description="Proton donor/acceptor" evidence="1">
    <location>
        <position position="89"/>
    </location>
</feature>
<feature type="binding site" evidence="1">
    <location>
        <begin position="10"/>
        <end position="17"/>
    </location>
    <ligand>
        <name>substrate</name>
    </ligand>
</feature>
<feature type="binding site" evidence="1">
    <location>
        <begin position="23"/>
        <end position="24"/>
    </location>
    <ligand>
        <name>substrate</name>
    </ligand>
</feature>
<feature type="binding site" evidence="1">
    <location>
        <position position="62"/>
    </location>
    <ligand>
        <name>substrate</name>
    </ligand>
</feature>
<feature type="binding site" evidence="1">
    <location>
        <begin position="89"/>
        <end position="92"/>
    </location>
    <ligand>
        <name>substrate</name>
    </ligand>
</feature>
<feature type="binding site" evidence="1">
    <location>
        <position position="100"/>
    </location>
    <ligand>
        <name>substrate</name>
    </ligand>
</feature>
<feature type="binding site" evidence="1">
    <location>
        <begin position="116"/>
        <end position="117"/>
    </location>
    <ligand>
        <name>substrate</name>
    </ligand>
</feature>
<feature type="binding site" evidence="1">
    <location>
        <begin position="185"/>
        <end position="186"/>
    </location>
    <ligand>
        <name>substrate</name>
    </ligand>
</feature>
<feature type="site" description="Transition state stabilizer" evidence="1">
    <location>
        <position position="184"/>
    </location>
</feature>
<protein>
    <recommendedName>
        <fullName evidence="1">2,3-bisphosphoglycerate-dependent phosphoglycerate mutase</fullName>
        <shortName evidence="1">BPG-dependent PGAM</shortName>
        <shortName evidence="1">PGAM</shortName>
        <shortName evidence="1">Phosphoglyceromutase</shortName>
        <shortName evidence="1">dPGM</shortName>
        <ecNumber evidence="1">5.4.2.11</ecNumber>
    </recommendedName>
</protein>
<dbReference type="EC" id="5.4.2.11" evidence="1"/>
<dbReference type="EMBL" id="CP001144">
    <property type="protein sequence ID" value="ACH74611.1"/>
    <property type="molecule type" value="Genomic_DNA"/>
</dbReference>
<dbReference type="RefSeq" id="WP_000301552.1">
    <property type="nucleotide sequence ID" value="NC_011205.1"/>
</dbReference>
<dbReference type="SMR" id="B5FP39"/>
<dbReference type="KEGG" id="sed:SeD_A0867"/>
<dbReference type="HOGENOM" id="CLU_033323_1_1_6"/>
<dbReference type="UniPathway" id="UPA00109">
    <property type="reaction ID" value="UER00186"/>
</dbReference>
<dbReference type="Proteomes" id="UP000008322">
    <property type="component" value="Chromosome"/>
</dbReference>
<dbReference type="GO" id="GO:0004619">
    <property type="term" value="F:phosphoglycerate mutase activity"/>
    <property type="evidence" value="ECO:0007669"/>
    <property type="project" value="UniProtKB-EC"/>
</dbReference>
<dbReference type="GO" id="GO:0006094">
    <property type="term" value="P:gluconeogenesis"/>
    <property type="evidence" value="ECO:0007669"/>
    <property type="project" value="UniProtKB-UniRule"/>
</dbReference>
<dbReference type="GO" id="GO:0006096">
    <property type="term" value="P:glycolytic process"/>
    <property type="evidence" value="ECO:0007669"/>
    <property type="project" value="UniProtKB-UniRule"/>
</dbReference>
<dbReference type="CDD" id="cd07067">
    <property type="entry name" value="HP_PGM_like"/>
    <property type="match status" value="1"/>
</dbReference>
<dbReference type="FunFam" id="3.40.50.1240:FF:000003">
    <property type="entry name" value="2,3-bisphosphoglycerate-dependent phosphoglycerate mutase"/>
    <property type="match status" value="1"/>
</dbReference>
<dbReference type="Gene3D" id="3.40.50.1240">
    <property type="entry name" value="Phosphoglycerate mutase-like"/>
    <property type="match status" value="1"/>
</dbReference>
<dbReference type="HAMAP" id="MF_01039">
    <property type="entry name" value="PGAM_GpmA"/>
    <property type="match status" value="1"/>
</dbReference>
<dbReference type="InterPro" id="IPR013078">
    <property type="entry name" value="His_Pase_superF_clade-1"/>
</dbReference>
<dbReference type="InterPro" id="IPR029033">
    <property type="entry name" value="His_PPase_superfam"/>
</dbReference>
<dbReference type="InterPro" id="IPR001345">
    <property type="entry name" value="PG/BPGM_mutase_AS"/>
</dbReference>
<dbReference type="InterPro" id="IPR005952">
    <property type="entry name" value="Phosphogly_mut1"/>
</dbReference>
<dbReference type="NCBIfam" id="TIGR01258">
    <property type="entry name" value="pgm_1"/>
    <property type="match status" value="1"/>
</dbReference>
<dbReference type="NCBIfam" id="NF010713">
    <property type="entry name" value="PRK14115.1"/>
    <property type="match status" value="1"/>
</dbReference>
<dbReference type="PANTHER" id="PTHR11931">
    <property type="entry name" value="PHOSPHOGLYCERATE MUTASE"/>
    <property type="match status" value="1"/>
</dbReference>
<dbReference type="Pfam" id="PF00300">
    <property type="entry name" value="His_Phos_1"/>
    <property type="match status" value="1"/>
</dbReference>
<dbReference type="PIRSF" id="PIRSF000709">
    <property type="entry name" value="6PFK_2-Ptase"/>
    <property type="match status" value="1"/>
</dbReference>
<dbReference type="SMART" id="SM00855">
    <property type="entry name" value="PGAM"/>
    <property type="match status" value="1"/>
</dbReference>
<dbReference type="SUPFAM" id="SSF53254">
    <property type="entry name" value="Phosphoglycerate mutase-like"/>
    <property type="match status" value="1"/>
</dbReference>
<dbReference type="PROSITE" id="PS00175">
    <property type="entry name" value="PG_MUTASE"/>
    <property type="match status" value="1"/>
</dbReference>
<gene>
    <name evidence="1" type="primary">gpmA</name>
    <name type="ordered locus">SeD_A0867</name>
</gene>
<organism>
    <name type="scientific">Salmonella dublin (strain CT_02021853)</name>
    <dbReference type="NCBI Taxonomy" id="439851"/>
    <lineage>
        <taxon>Bacteria</taxon>
        <taxon>Pseudomonadati</taxon>
        <taxon>Pseudomonadota</taxon>
        <taxon>Gammaproteobacteria</taxon>
        <taxon>Enterobacterales</taxon>
        <taxon>Enterobacteriaceae</taxon>
        <taxon>Salmonella</taxon>
    </lineage>
</organism>